<proteinExistence type="inferred from homology"/>
<dbReference type="EC" id="1.18.1.2" evidence="1"/>
<dbReference type="EMBL" id="CP000096">
    <property type="protein sequence ID" value="ABB24373.1"/>
    <property type="status" value="ALT_INIT"/>
    <property type="molecule type" value="Genomic_DNA"/>
</dbReference>
<dbReference type="RefSeq" id="WP_041463872.1">
    <property type="nucleotide sequence ID" value="NC_007512.1"/>
</dbReference>
<dbReference type="SMR" id="Q3B2Q8"/>
<dbReference type="STRING" id="319225.Plut_1516"/>
<dbReference type="KEGG" id="plt:Plut_1516"/>
<dbReference type="eggNOG" id="COG0492">
    <property type="taxonomic scope" value="Bacteria"/>
</dbReference>
<dbReference type="HOGENOM" id="CLU_031864_5_5_10"/>
<dbReference type="OrthoDB" id="9806179at2"/>
<dbReference type="Proteomes" id="UP000002709">
    <property type="component" value="Chromosome"/>
</dbReference>
<dbReference type="GO" id="GO:0004324">
    <property type="term" value="F:ferredoxin-NADP+ reductase activity"/>
    <property type="evidence" value="ECO:0007669"/>
    <property type="project" value="UniProtKB-UniRule"/>
</dbReference>
<dbReference type="GO" id="GO:0050660">
    <property type="term" value="F:flavin adenine dinucleotide binding"/>
    <property type="evidence" value="ECO:0007669"/>
    <property type="project" value="UniProtKB-UniRule"/>
</dbReference>
<dbReference type="GO" id="GO:0050661">
    <property type="term" value="F:NADP binding"/>
    <property type="evidence" value="ECO:0007669"/>
    <property type="project" value="UniProtKB-UniRule"/>
</dbReference>
<dbReference type="Gene3D" id="3.50.50.60">
    <property type="entry name" value="FAD/NAD(P)-binding domain"/>
    <property type="match status" value="2"/>
</dbReference>
<dbReference type="HAMAP" id="MF_01685">
    <property type="entry name" value="FENR2"/>
    <property type="match status" value="1"/>
</dbReference>
<dbReference type="InterPro" id="IPR036188">
    <property type="entry name" value="FAD/NAD-bd_sf"/>
</dbReference>
<dbReference type="InterPro" id="IPR023753">
    <property type="entry name" value="FAD/NAD-binding_dom"/>
</dbReference>
<dbReference type="InterPro" id="IPR022890">
    <property type="entry name" value="Fd--NADP_Rdtase_type_2"/>
</dbReference>
<dbReference type="InterPro" id="IPR050097">
    <property type="entry name" value="Ferredoxin-NADP_redctase_2"/>
</dbReference>
<dbReference type="PANTHER" id="PTHR48105">
    <property type="entry name" value="THIOREDOXIN REDUCTASE 1-RELATED-RELATED"/>
    <property type="match status" value="1"/>
</dbReference>
<dbReference type="Pfam" id="PF07992">
    <property type="entry name" value="Pyr_redox_2"/>
    <property type="match status" value="1"/>
</dbReference>
<dbReference type="PRINTS" id="PR00368">
    <property type="entry name" value="FADPNR"/>
</dbReference>
<dbReference type="PRINTS" id="PR00469">
    <property type="entry name" value="PNDRDTASEII"/>
</dbReference>
<dbReference type="SUPFAM" id="SSF51905">
    <property type="entry name" value="FAD/NAD(P)-binding domain"/>
    <property type="match status" value="1"/>
</dbReference>
<sequence length="350" mass="37768">MTLQRVSPDGILDLTIIGGGPTGIFAAFQCGMNNISCRIIESMPQLGGQLSALYPEKHIYDVAGFPEVPAAGLVDSLWKQTERYGPEVILGETVISYRKLENGDFQVVTASGRTFVSRALLLAAGLGAFSPRKLPQLGNISPLEDRSVFYAVKNRADFRDKNVVIVGGGDSALDWTVGLMGVARKVTLVHRMHEFQGHGKTAREVDEAKESGAIDVHLSTEVSAIDLNGDTLQAVHLKRRDGITSRVEADRLLLLIGFKSNLGPLADWGLELVDNAVEVDGHMKTSVDGLYAAGDIASYPGKLKIIQTGLSDAAMAVRHSLTYIKPGEKIRHTFSSVKMAKEKKSEGQNA</sequence>
<feature type="chain" id="PRO_0000364896" description="Ferredoxin--NADP reductase">
    <location>
        <begin position="1"/>
        <end position="350"/>
    </location>
</feature>
<feature type="binding site" evidence="1">
    <location>
        <position position="22"/>
    </location>
    <ligand>
        <name>FAD</name>
        <dbReference type="ChEBI" id="CHEBI:57692"/>
    </ligand>
</feature>
<feature type="binding site" evidence="1">
    <location>
        <position position="41"/>
    </location>
    <ligand>
        <name>FAD</name>
        <dbReference type="ChEBI" id="CHEBI:57692"/>
    </ligand>
</feature>
<feature type="binding site" evidence="1">
    <location>
        <position position="49"/>
    </location>
    <ligand>
        <name>FAD</name>
        <dbReference type="ChEBI" id="CHEBI:57692"/>
    </ligand>
</feature>
<feature type="binding site" evidence="1">
    <location>
        <position position="54"/>
    </location>
    <ligand>
        <name>FAD</name>
        <dbReference type="ChEBI" id="CHEBI:57692"/>
    </ligand>
</feature>
<feature type="binding site" evidence="1">
    <location>
        <position position="94"/>
    </location>
    <ligand>
        <name>FAD</name>
        <dbReference type="ChEBI" id="CHEBI:57692"/>
    </ligand>
</feature>
<feature type="binding site" evidence="1">
    <location>
        <position position="129"/>
    </location>
    <ligand>
        <name>FAD</name>
        <dbReference type="ChEBI" id="CHEBI:57692"/>
    </ligand>
</feature>
<feature type="binding site" evidence="1">
    <location>
        <position position="295"/>
    </location>
    <ligand>
        <name>FAD</name>
        <dbReference type="ChEBI" id="CHEBI:57692"/>
    </ligand>
</feature>
<feature type="binding site" evidence="1">
    <location>
        <position position="336"/>
    </location>
    <ligand>
        <name>FAD</name>
        <dbReference type="ChEBI" id="CHEBI:57692"/>
    </ligand>
</feature>
<organism>
    <name type="scientific">Chlorobium luteolum (strain DSM 273 / BCRC 81028 / 2530)</name>
    <name type="common">Pelodictyon luteolum</name>
    <dbReference type="NCBI Taxonomy" id="319225"/>
    <lineage>
        <taxon>Bacteria</taxon>
        <taxon>Pseudomonadati</taxon>
        <taxon>Chlorobiota</taxon>
        <taxon>Chlorobiia</taxon>
        <taxon>Chlorobiales</taxon>
        <taxon>Chlorobiaceae</taxon>
        <taxon>Chlorobium/Pelodictyon group</taxon>
        <taxon>Pelodictyon</taxon>
    </lineage>
</organism>
<gene>
    <name type="ordered locus">Plut_1516</name>
</gene>
<name>FENR_CHLL3</name>
<keyword id="KW-0274">FAD</keyword>
<keyword id="KW-0285">Flavoprotein</keyword>
<keyword id="KW-0521">NADP</keyword>
<keyword id="KW-0560">Oxidoreductase</keyword>
<keyword id="KW-1185">Reference proteome</keyword>
<evidence type="ECO:0000255" key="1">
    <source>
        <dbReference type="HAMAP-Rule" id="MF_01685"/>
    </source>
</evidence>
<evidence type="ECO:0000305" key="2"/>
<accession>Q3B2Q8</accession>
<reference key="1">
    <citation type="submission" date="2005-08" db="EMBL/GenBank/DDBJ databases">
        <title>Complete sequence of Pelodictyon luteolum DSM 273.</title>
        <authorList>
            <consortium name="US DOE Joint Genome Institute"/>
            <person name="Copeland A."/>
            <person name="Lucas S."/>
            <person name="Lapidus A."/>
            <person name="Barry K."/>
            <person name="Detter J.C."/>
            <person name="Glavina T."/>
            <person name="Hammon N."/>
            <person name="Israni S."/>
            <person name="Pitluck S."/>
            <person name="Bryant D."/>
            <person name="Schmutz J."/>
            <person name="Larimer F."/>
            <person name="Land M."/>
            <person name="Kyrpides N."/>
            <person name="Ivanova N."/>
            <person name="Richardson P."/>
        </authorList>
    </citation>
    <scope>NUCLEOTIDE SEQUENCE [LARGE SCALE GENOMIC DNA]</scope>
    <source>
        <strain>DSM 273 / BCRC 81028 / 2530</strain>
    </source>
</reference>
<protein>
    <recommendedName>
        <fullName evidence="1">Ferredoxin--NADP reductase</fullName>
        <shortName evidence="1">FNR</shortName>
        <shortName evidence="1">Fd-NADP(+) reductase</shortName>
        <ecNumber evidence="1">1.18.1.2</ecNumber>
    </recommendedName>
</protein>
<comment type="catalytic activity">
    <reaction evidence="1">
        <text>2 reduced [2Fe-2S]-[ferredoxin] + NADP(+) + H(+) = 2 oxidized [2Fe-2S]-[ferredoxin] + NADPH</text>
        <dbReference type="Rhea" id="RHEA:20125"/>
        <dbReference type="Rhea" id="RHEA-COMP:10000"/>
        <dbReference type="Rhea" id="RHEA-COMP:10001"/>
        <dbReference type="ChEBI" id="CHEBI:15378"/>
        <dbReference type="ChEBI" id="CHEBI:33737"/>
        <dbReference type="ChEBI" id="CHEBI:33738"/>
        <dbReference type="ChEBI" id="CHEBI:57783"/>
        <dbReference type="ChEBI" id="CHEBI:58349"/>
        <dbReference type="EC" id="1.18.1.2"/>
    </reaction>
</comment>
<comment type="cofactor">
    <cofactor evidence="1">
        <name>FAD</name>
        <dbReference type="ChEBI" id="CHEBI:57692"/>
    </cofactor>
    <text evidence="1">Binds 1 FAD per subunit.</text>
</comment>
<comment type="subunit">
    <text evidence="1">Homodimer.</text>
</comment>
<comment type="similarity">
    <text evidence="1">Belongs to the ferredoxin--NADP reductase type 2 family.</text>
</comment>
<comment type="sequence caution" evidence="2">
    <conflict type="erroneous initiation">
        <sequence resource="EMBL-CDS" id="ABB24373"/>
    </conflict>
</comment>